<dbReference type="EMBL" id="U18466">
    <property type="protein sequence ID" value="AAA65384.1"/>
    <property type="molecule type" value="Genomic_DNA"/>
</dbReference>
<dbReference type="RefSeq" id="NP_042848.1">
    <property type="nucleotide sequence ID" value="NC_001659.2"/>
</dbReference>
<dbReference type="GeneID" id="22220384"/>
<dbReference type="KEGG" id="vg:22220384"/>
<dbReference type="Proteomes" id="UP000000624">
    <property type="component" value="Segment"/>
</dbReference>
<dbReference type="GO" id="GO:0033644">
    <property type="term" value="C:host cell membrane"/>
    <property type="evidence" value="ECO:0007669"/>
    <property type="project" value="UniProtKB-SubCell"/>
</dbReference>
<dbReference type="GO" id="GO:0016020">
    <property type="term" value="C:membrane"/>
    <property type="evidence" value="ECO:0007669"/>
    <property type="project" value="UniProtKB-KW"/>
</dbReference>
<accession>Q65214</accession>
<feature type="chain" id="PRO_0000373363" description="Uncharacterized protein DP60R">
    <location>
        <begin position="1"/>
        <end position="60"/>
    </location>
</feature>
<feature type="transmembrane region" description="Helical" evidence="1">
    <location>
        <begin position="11"/>
        <end position="33"/>
    </location>
</feature>
<feature type="glycosylation site" description="N-linked (GlcNAc...) asparagine; by host" evidence="1">
    <location>
        <position position="40"/>
    </location>
</feature>
<feature type="glycosylation site" description="N-linked (GlcNAc...) asparagine; by host" evidence="1">
    <location>
        <position position="57"/>
    </location>
</feature>
<name>DP60R_ASFB7</name>
<gene>
    <name type="ordered locus">BA71V-158</name>
    <name type="ORF">DP60R</name>
</gene>
<reference key="1">
    <citation type="journal article" date="1995" name="Virology">
        <title>Analysis of the complete nucleotide sequence of African swine fever virus.</title>
        <authorList>
            <person name="Yanez R.J."/>
            <person name="Rodriguez J.M."/>
            <person name="Nogal M.L."/>
            <person name="Yuste L."/>
            <person name="Enriquez C."/>
            <person name="Rodriguez J.F."/>
            <person name="Vinuela E."/>
        </authorList>
    </citation>
    <scope>NUCLEOTIDE SEQUENCE [LARGE SCALE GENOMIC DNA]</scope>
</reference>
<reference key="2">
    <citation type="journal article" date="2020" name="J. Virol.">
        <title>The African Swine Fever Virus Transcriptome.</title>
        <authorList>
            <person name="Cackett G."/>
            <person name="Matelska D."/>
            <person name="Sykora M."/>
            <person name="Portugal R."/>
            <person name="Malecki M."/>
            <person name="Baehler J."/>
            <person name="Dixon L."/>
            <person name="Werner F."/>
        </authorList>
    </citation>
    <scope>INDUCTION</scope>
</reference>
<evidence type="ECO:0000255" key="1"/>
<evidence type="ECO:0000269" key="2">
    <source>
    </source>
</evidence>
<evidence type="ECO:0000305" key="3"/>
<keyword id="KW-0244">Early protein</keyword>
<keyword id="KW-0325">Glycoprotein</keyword>
<keyword id="KW-1043">Host membrane</keyword>
<keyword id="KW-0472">Membrane</keyword>
<keyword id="KW-1185">Reference proteome</keyword>
<keyword id="KW-0812">Transmembrane</keyword>
<keyword id="KW-1133">Transmembrane helix</keyword>
<organism>
    <name type="scientific">African swine fever virus (strain Badajoz 1971 Vero-adapted)</name>
    <name type="common">Ba71V</name>
    <name type="synonym">ASFV</name>
    <dbReference type="NCBI Taxonomy" id="10498"/>
    <lineage>
        <taxon>Viruses</taxon>
        <taxon>Varidnaviria</taxon>
        <taxon>Bamfordvirae</taxon>
        <taxon>Nucleocytoviricota</taxon>
        <taxon>Pokkesviricetes</taxon>
        <taxon>Asfuvirales</taxon>
        <taxon>Asfarviridae</taxon>
        <taxon>Asfivirus</taxon>
        <taxon>African swine fever virus</taxon>
    </lineage>
</organism>
<comment type="subcellular location">
    <subcellularLocation>
        <location evidence="3">Host membrane</location>
        <topology evidence="3">Single-pass membrane protein</topology>
    </subcellularLocation>
</comment>
<comment type="induction">
    <text evidence="2">Expressed in the early phase of the viral replicative cycle.</text>
</comment>
<proteinExistence type="evidence at transcript level"/>
<organismHost>
    <name type="scientific">Ornithodoros</name>
    <name type="common">relapsing fever ticks</name>
    <dbReference type="NCBI Taxonomy" id="6937"/>
</organismHost>
<organismHost>
    <name type="scientific">Sus scrofa</name>
    <name type="common">Pig</name>
    <dbReference type="NCBI Taxonomy" id="9823"/>
</organismHost>
<protein>
    <recommendedName>
        <fullName>Uncharacterized protein DP60R</fullName>
    </recommendedName>
</protein>
<sequence length="60" mass="7015">MSSIWPPQKKVFTVGFITGGVTPVMVSFVWPAAQPQKKINYSRKKKYFRPRSFYKKNVSF</sequence>